<keyword id="KW-0025">Alternative splicing</keyword>
<keyword id="KW-0131">Cell cycle</keyword>
<keyword id="KW-0132">Cell division</keyword>
<keyword id="KW-0175">Coiled coil</keyword>
<keyword id="KW-0963">Cytoplasm</keyword>
<keyword id="KW-0206">Cytoskeleton</keyword>
<keyword id="KW-0333">Golgi apparatus</keyword>
<keyword id="KW-0472">Membrane</keyword>
<keyword id="KW-0488">Methylation</keyword>
<keyword id="KW-0493">Microtubule</keyword>
<keyword id="KW-0498">Mitosis</keyword>
<keyword id="KW-0597">Phosphoprotein</keyword>
<keyword id="KW-0653">Protein transport</keyword>
<keyword id="KW-1185">Reference proteome</keyword>
<keyword id="KW-0813">Transport</keyword>
<sequence>MWPPRFPPPRPGMSEETRQSKLAAAKKKLREYQQKNSPGVPAGAKKKKKIKNGHSPERPTASDCQSPENVPTDHIAPAPPTAATDTMFLGVTPSPDADLTQSHDAGNCSNLMEETKTFSSTESLRQLSQQLNGLVSESTSYINGEGLTSSNMKELENRYQELAVALDSSYVTNKQLSSTIEELKQQNQDTLDQLEKEKKDYQQKLAKEQGSLREQLQVHIQTIGILVSEKAELQTALAHTQQAARQKAGESEDLASRLQSSRQRVGELERTLSTVSTQQKQADRYNKDLTKERDALKLELYKNSKSNEDLRQQNSELEEKLRVLVAEKAAAQLGVEELQKKLEMSELLLQQFSSQSSAAGGNEQLQHAMEERAQLETHVSQLMESLKQLQVERDQYAENLKGESAMWQQRVQQMAEQVHTLKEEKEHRERQVQELETSLAALRSQMEEPPPPEPPAGPSEAEEQLQGEVEQLHKELERLTGQLRAQVQDNESLSHLNREQEGRLLELEREAQRWSEQAEERKQILESMQSDRTTISRALSQNRELKEQLAELQNGFVRLTNENMEITSALQSEQHVKKELARKLGELQERLGELKETVELKSQEAQGLQEQRDQCLSHLQQYAAAYQQHLAAYEQLTSEKEAIHKQLLLQTQLMDQLQHEEVQGKMAAELARQELQEAQERLKATSQENQQLQAQLSLLVLPGEGDVDQEEEDEEVPQSSLAIPEDLDSREAMVAFFNAAIARAEEEQARLRVQLKEQKARCRSLSHLAAPVQSKLEKEAVVPRNVDDSASEESNQALHVAMEKLQSRFLEVMQEKVELKERVEELEHCCIQLSGETDTIGEYIALYQNQRAVLKARHLEKEEYISRLAQDKEEMKVKLLELQELVLRLVNERNEWQGKFLAVSQNPGDVLTPVPTGSQEFGAADQQDDLREVSLADDIEPAQGEAGVPAPHENPTAQQIMQLLREIQNPRERPGLGSNPCIPFFYRADENDEVKIMVV</sequence>
<name>GOGA2_MOUSE</name>
<feature type="chain" id="PRO_0000190055" description="Golgin subfamily A member 2">
    <location>
        <begin position="1"/>
        <end position="999"/>
    </location>
</feature>
<feature type="region of interest" description="Interaction with p115/USO1" evidence="2">
    <location>
        <begin position="1"/>
        <end position="86"/>
    </location>
</feature>
<feature type="region of interest" description="Disordered" evidence="4">
    <location>
        <begin position="1"/>
        <end position="80"/>
    </location>
</feature>
<feature type="region of interest" description="Disordered" evidence="4">
    <location>
        <begin position="244"/>
        <end position="288"/>
    </location>
</feature>
<feature type="region of interest" description="Disordered" evidence="4">
    <location>
        <begin position="444"/>
        <end position="468"/>
    </location>
</feature>
<feature type="region of interest" description="Interaction with GORASP1/GRASP65" evidence="2">
    <location>
        <begin position="989"/>
        <end position="999"/>
    </location>
</feature>
<feature type="coiled-coil region" evidence="3">
    <location>
        <begin position="147"/>
        <end position="895"/>
    </location>
</feature>
<feature type="short sequence motif" description="Nuclear localization signal" evidence="1">
    <location>
        <begin position="26"/>
        <end position="49"/>
    </location>
</feature>
<feature type="compositionally biased region" description="Pro residues" evidence="4">
    <location>
        <begin position="1"/>
        <end position="11"/>
    </location>
</feature>
<feature type="compositionally biased region" description="Polar residues" evidence="4">
    <location>
        <begin position="271"/>
        <end position="280"/>
    </location>
</feature>
<feature type="compositionally biased region" description="Pro residues" evidence="4">
    <location>
        <begin position="448"/>
        <end position="457"/>
    </location>
</feature>
<feature type="modified residue" description="Dimethylated arginine" evidence="1">
    <location>
        <position position="18"/>
    </location>
</feature>
<feature type="modified residue" description="Dimethylated arginine" evidence="1">
    <location>
        <position position="30"/>
    </location>
</feature>
<feature type="modified residue" description="Phosphoserine" evidence="2">
    <location>
        <position position="37"/>
    </location>
</feature>
<feature type="modified residue" description="Phosphoserine" evidence="1">
    <location>
        <position position="66"/>
    </location>
</feature>
<feature type="modified residue" description="Phosphoserine" evidence="1">
    <location>
        <position position="273"/>
    </location>
</feature>
<feature type="modified residue" description="Phosphoserine" evidence="1">
    <location>
        <position position="438"/>
    </location>
</feature>
<feature type="modified residue" description="Phosphoserine" evidence="1">
    <location>
        <position position="697"/>
    </location>
</feature>
<feature type="modified residue" description="Phosphoserine" evidence="1">
    <location>
        <position position="934"/>
    </location>
</feature>
<feature type="modified residue" description="Phosphoserine" evidence="13">
    <location>
        <position position="978"/>
    </location>
</feature>
<feature type="splice variant" id="VSP_039027" description="In isoform 2." evidence="9">
    <location>
        <begin position="70"/>
        <end position="101"/>
    </location>
</feature>
<evidence type="ECO:0000250" key="1">
    <source>
        <dbReference type="UniProtKB" id="Q08379"/>
    </source>
</evidence>
<evidence type="ECO:0000250" key="2">
    <source>
        <dbReference type="UniProtKB" id="Q62839"/>
    </source>
</evidence>
<evidence type="ECO:0000255" key="3"/>
<evidence type="ECO:0000256" key="4">
    <source>
        <dbReference type="SAM" id="MobiDB-lite"/>
    </source>
</evidence>
<evidence type="ECO:0000269" key="5">
    <source>
    </source>
</evidence>
<evidence type="ECO:0000269" key="6">
    <source>
    </source>
</evidence>
<evidence type="ECO:0000269" key="7">
    <source>
    </source>
</evidence>
<evidence type="ECO:0000269" key="8">
    <source>
    </source>
</evidence>
<evidence type="ECO:0000303" key="9">
    <source>
    </source>
</evidence>
<evidence type="ECO:0000303" key="10">
    <source>
    </source>
</evidence>
<evidence type="ECO:0000303" key="11">
    <source>
    </source>
</evidence>
<evidence type="ECO:0000305" key="12"/>
<evidence type="ECO:0007744" key="13">
    <source>
    </source>
</evidence>
<proteinExistence type="evidence at protein level"/>
<protein>
    <recommendedName>
        <fullName>Golgin subfamily A member 2</fullName>
    </recommendedName>
    <alternativeName>
        <fullName>130 kDa cis-Golgi matrix protein</fullName>
        <shortName evidence="10 11">GM130</shortName>
    </alternativeName>
</protein>
<accession>Q921M4</accession>
<accession>A2AN43</accession>
<accession>A2AN47</accession>
<reference key="1">
    <citation type="journal article" date="2009" name="PLoS Biol.">
        <title>Lineage-specific biology revealed by a finished genome assembly of the mouse.</title>
        <authorList>
            <person name="Church D.M."/>
            <person name="Goodstadt L."/>
            <person name="Hillier L.W."/>
            <person name="Zody M.C."/>
            <person name="Goldstein S."/>
            <person name="She X."/>
            <person name="Bult C.J."/>
            <person name="Agarwala R."/>
            <person name="Cherry J.L."/>
            <person name="DiCuccio M."/>
            <person name="Hlavina W."/>
            <person name="Kapustin Y."/>
            <person name="Meric P."/>
            <person name="Maglott D."/>
            <person name="Birtle Z."/>
            <person name="Marques A.C."/>
            <person name="Graves T."/>
            <person name="Zhou S."/>
            <person name="Teague B."/>
            <person name="Potamousis K."/>
            <person name="Churas C."/>
            <person name="Place M."/>
            <person name="Herschleb J."/>
            <person name="Runnheim R."/>
            <person name="Forrest D."/>
            <person name="Amos-Landgraf J."/>
            <person name="Schwartz D.C."/>
            <person name="Cheng Z."/>
            <person name="Lindblad-Toh K."/>
            <person name="Eichler E.E."/>
            <person name="Ponting C.P."/>
        </authorList>
    </citation>
    <scope>NUCLEOTIDE SEQUENCE [LARGE SCALE GENOMIC DNA]</scope>
    <source>
        <strain>C57BL/6J</strain>
    </source>
</reference>
<reference key="2">
    <citation type="submission" date="2005-07" db="EMBL/GenBank/DDBJ databases">
        <authorList>
            <person name="Mural R.J."/>
            <person name="Adams M.D."/>
            <person name="Myers E.W."/>
            <person name="Smith H.O."/>
            <person name="Venter J.C."/>
        </authorList>
    </citation>
    <scope>NUCLEOTIDE SEQUENCE [LARGE SCALE GENOMIC DNA]</scope>
</reference>
<reference key="3">
    <citation type="journal article" date="2004" name="Genome Res.">
        <title>The status, quality, and expansion of the NIH full-length cDNA project: the Mammalian Gene Collection (MGC).</title>
        <authorList>
            <consortium name="The MGC Project Team"/>
        </authorList>
    </citation>
    <scope>NUCLEOTIDE SEQUENCE [LARGE SCALE MRNA] OF 16-999 (ISOFORM 2)</scope>
    <source>
        <tissue>Mammary cancer</tissue>
    </source>
</reference>
<reference key="4">
    <citation type="journal article" date="2010" name="Cell">
        <title>A tissue-specific atlas of mouse protein phosphorylation and expression.</title>
        <authorList>
            <person name="Huttlin E.L."/>
            <person name="Jedrychowski M.P."/>
            <person name="Elias J.E."/>
            <person name="Goswami T."/>
            <person name="Rad R."/>
            <person name="Beausoleil S.A."/>
            <person name="Villen J."/>
            <person name="Haas W."/>
            <person name="Sowa M.E."/>
            <person name="Gygi S.P."/>
        </authorList>
    </citation>
    <scope>PHOSPHORYLATION [LARGE SCALE ANALYSIS] AT SER-978</scope>
    <scope>IDENTIFICATION BY MASS SPECTROMETRY [LARGE SCALE ANALYSIS]</scope>
    <source>
        <tissue>Brain</tissue>
        <tissue>Brown adipose tissue</tissue>
        <tissue>Heart</tissue>
        <tissue>Kidney</tissue>
        <tissue>Liver</tissue>
        <tissue>Lung</tissue>
        <tissue>Pancreas</tissue>
        <tissue>Spleen</tissue>
        <tissue>Testis</tissue>
    </source>
</reference>
<reference key="5">
    <citation type="journal article" date="2011" name="Cell Cycle">
        <title>GM130, a cis-Golgi protein, regulates meiotic spindle assembly and asymmetric division in mouse oocyte.</title>
        <authorList>
            <person name="Zhang C.H."/>
            <person name="Wang Z.B."/>
            <person name="Quan S."/>
            <person name="Huang X."/>
            <person name="Tong J.S."/>
            <person name="Ma J.Y."/>
            <person name="Guo L."/>
            <person name="Wei Y.C."/>
            <person name="Ouyang Y.C."/>
            <person name="Hou Y."/>
            <person name="Xing F.Q."/>
            <person name="Sun Q.Y."/>
        </authorList>
    </citation>
    <scope>FUNCTION</scope>
    <scope>SUBCELLULAR LOCATION</scope>
    <scope>TISSUE SPECIFICITY</scope>
</reference>
<reference key="6">
    <citation type="journal article" date="2015" name="Cell">
        <title>GM130 regulates Golgi-derived spindle assembly by activating TPX2 and capturing microtubules.</title>
        <authorList>
            <person name="Wei J.H."/>
            <person name="Zhang Z.C."/>
            <person name="Wynn R.M."/>
            <person name="Seemann J."/>
        </authorList>
    </citation>
    <scope>FUNCTION</scope>
    <scope>MICROTUBULE-BINDING</scope>
</reference>
<reference key="7">
    <citation type="journal article" date="2017" name="PLoS Genet.">
        <title>Genetic, structural, and chemical insights into the dual function of GRASP55 in germ cell Golgi remodeling and JAM-C polarized localization during spermatogenesis.</title>
        <authorList>
            <person name="Cartier-Michaud A."/>
            <person name="Bailly A.L."/>
            <person name="Betzi S."/>
            <person name="Shi X."/>
            <person name="Lissitzky J.C."/>
            <person name="Zarubica A."/>
            <person name="Serge A."/>
            <person name="Roche P."/>
            <person name="Lugari A."/>
            <person name="Hamon V."/>
            <person name="Bardin F."/>
            <person name="Derviaux C."/>
            <person name="Lembo F."/>
            <person name="Audebert S."/>
            <person name="Marchetto S."/>
            <person name="Durand B."/>
            <person name="Borg J.P."/>
            <person name="Shi N."/>
            <person name="Morelli X."/>
            <person name="Aurrand-Lions M."/>
        </authorList>
    </citation>
    <scope>TISSUE SPECIFICITY</scope>
</reference>
<reference key="8">
    <citation type="journal article" date="2017" name="Proc. Natl. Acad. Sci. U.S.A.">
        <title>Loss of the golgin GM130 causes Golgi disruption, Purkinje neuron loss, and ataxia in mice.</title>
        <authorList>
            <person name="Liu C."/>
            <person name="Mei M."/>
            <person name="Li Q."/>
            <person name="Roboti P."/>
            <person name="Pang Q."/>
            <person name="Ying Z."/>
            <person name="Gao F."/>
            <person name="Lowe M."/>
            <person name="Bao S."/>
        </authorList>
    </citation>
    <scope>DISRUPTION PHENOTYPE</scope>
    <scope>FUNCTION</scope>
    <scope>TISSUE SPECIFICITY</scope>
</reference>
<reference key="9">
    <citation type="journal article" date="2016" name="Hum. Genet.">
        <title>GOLGA2, encoding a master regulator of golgi apparatus, is mutated in a patient with a neuromuscular disorder.</title>
        <authorList>
            <person name="Shamseldin H.E."/>
            <person name="Bennett A.H."/>
            <person name="Alfadhel M."/>
            <person name="Gupta V."/>
            <person name="Alkuraya F.S."/>
        </authorList>
    </citation>
    <scope>TISSUE SPECIFICITY</scope>
</reference>
<organism>
    <name type="scientific">Mus musculus</name>
    <name type="common">Mouse</name>
    <dbReference type="NCBI Taxonomy" id="10090"/>
    <lineage>
        <taxon>Eukaryota</taxon>
        <taxon>Metazoa</taxon>
        <taxon>Chordata</taxon>
        <taxon>Craniata</taxon>
        <taxon>Vertebrata</taxon>
        <taxon>Euteleostomi</taxon>
        <taxon>Mammalia</taxon>
        <taxon>Eutheria</taxon>
        <taxon>Euarchontoglires</taxon>
        <taxon>Glires</taxon>
        <taxon>Rodentia</taxon>
        <taxon>Myomorpha</taxon>
        <taxon>Muroidea</taxon>
        <taxon>Muridae</taxon>
        <taxon>Murinae</taxon>
        <taxon>Mus</taxon>
        <taxon>Mus</taxon>
    </lineage>
</organism>
<dbReference type="EMBL" id="AL808027">
    <property type="protein sequence ID" value="CAM15845.1"/>
    <property type="molecule type" value="Genomic_DNA"/>
</dbReference>
<dbReference type="EMBL" id="AL808027">
    <property type="protein sequence ID" value="CAM15849.1"/>
    <property type="status" value="ALT_INIT"/>
    <property type="molecule type" value="Genomic_DNA"/>
</dbReference>
<dbReference type="EMBL" id="CH466542">
    <property type="protein sequence ID" value="EDL08537.1"/>
    <property type="molecule type" value="Genomic_DNA"/>
</dbReference>
<dbReference type="EMBL" id="BC011407">
    <property type="protein sequence ID" value="AAH11407.1"/>
    <property type="status" value="ALT_INIT"/>
    <property type="molecule type" value="mRNA"/>
</dbReference>
<dbReference type="RefSeq" id="NP_001074437.1">
    <property type="nucleotide sequence ID" value="NM_001080968.1"/>
</dbReference>
<dbReference type="RefSeq" id="XP_006498556.1">
    <property type="nucleotide sequence ID" value="XM_006498493.3"/>
</dbReference>
<dbReference type="SMR" id="Q921M4"/>
<dbReference type="BioGRID" id="221239">
    <property type="interactions" value="19"/>
</dbReference>
<dbReference type="FunCoup" id="Q921M4">
    <property type="interactions" value="1833"/>
</dbReference>
<dbReference type="IntAct" id="Q921M4">
    <property type="interactions" value="7"/>
</dbReference>
<dbReference type="MINT" id="Q921M4"/>
<dbReference type="STRING" id="10090.ENSMUSP00000097768"/>
<dbReference type="GlyGen" id="Q921M4">
    <property type="glycosylation" value="3 sites, 1 O-linked glycan (2 sites)"/>
</dbReference>
<dbReference type="iPTMnet" id="Q921M4"/>
<dbReference type="PhosphoSitePlus" id="Q921M4"/>
<dbReference type="SwissPalm" id="Q921M4"/>
<dbReference type="jPOST" id="Q921M4"/>
<dbReference type="PaxDb" id="10090-ENSMUSP00000109004"/>
<dbReference type="PeptideAtlas" id="Q921M4"/>
<dbReference type="ProteomicsDB" id="271245">
    <molecule id="Q921M4-1"/>
</dbReference>
<dbReference type="ProteomicsDB" id="271246">
    <molecule id="Q921M4-2"/>
</dbReference>
<dbReference type="Pumba" id="Q921M4"/>
<dbReference type="Ensembl" id="ENSMUST00000113377.8">
    <molecule id="Q921M4-1"/>
    <property type="protein sequence ID" value="ENSMUSP00000109004.2"/>
    <property type="gene ID" value="ENSMUSG00000002546.18"/>
</dbReference>
<dbReference type="GeneID" id="99412"/>
<dbReference type="KEGG" id="mmu:99412"/>
<dbReference type="UCSC" id="uc008jew.1">
    <molecule id="Q921M4-1"/>
    <property type="organism name" value="mouse"/>
</dbReference>
<dbReference type="UCSC" id="uc008jex.1">
    <molecule id="Q921M4-2"/>
    <property type="organism name" value="mouse"/>
</dbReference>
<dbReference type="AGR" id="MGI:2139395"/>
<dbReference type="CTD" id="2801"/>
<dbReference type="MGI" id="MGI:2139395">
    <property type="gene designation" value="Golga2"/>
</dbReference>
<dbReference type="VEuPathDB" id="HostDB:ENSMUSG00000002546"/>
<dbReference type="eggNOG" id="KOG4725">
    <property type="taxonomic scope" value="Eukaryota"/>
</dbReference>
<dbReference type="GeneTree" id="ENSGT00530000062932"/>
<dbReference type="InParanoid" id="Q921M4"/>
<dbReference type="OrthoDB" id="5978643at2759"/>
<dbReference type="PhylomeDB" id="Q921M4"/>
<dbReference type="TreeFam" id="TF316990"/>
<dbReference type="Reactome" id="R-MMU-162658">
    <property type="pathway name" value="Golgi Cisternae Pericentriolar Stack Reorganization"/>
</dbReference>
<dbReference type="Reactome" id="R-MMU-204005">
    <property type="pathway name" value="COPII-mediated vesicle transport"/>
</dbReference>
<dbReference type="Reactome" id="R-MMU-6807878">
    <property type="pathway name" value="COPI-mediated anterograde transport"/>
</dbReference>
<dbReference type="Reactome" id="R-MMU-9013405">
    <property type="pathway name" value="RHOD GTPase cycle"/>
</dbReference>
<dbReference type="BioGRID-ORCS" id="99412">
    <property type="hits" value="1 hit in 77 CRISPR screens"/>
</dbReference>
<dbReference type="CD-CODE" id="01CA17F3">
    <property type="entry name" value="Centrosome"/>
</dbReference>
<dbReference type="ChiTaRS" id="Golga2">
    <property type="organism name" value="mouse"/>
</dbReference>
<dbReference type="PRO" id="PR:Q921M4"/>
<dbReference type="Proteomes" id="UP000000589">
    <property type="component" value="Chromosome 2"/>
</dbReference>
<dbReference type="RNAct" id="Q921M4">
    <property type="molecule type" value="protein"/>
</dbReference>
<dbReference type="Bgee" id="ENSMUSG00000002546">
    <property type="expression patterns" value="Expressed in animal zygote and 251 other cell types or tissues"/>
</dbReference>
<dbReference type="ExpressionAtlas" id="Q921M4">
    <property type="expression patterns" value="baseline and differential"/>
</dbReference>
<dbReference type="GO" id="GO:0005801">
    <property type="term" value="C:cis-Golgi network"/>
    <property type="evidence" value="ECO:0000314"/>
    <property type="project" value="MGI"/>
</dbReference>
<dbReference type="GO" id="GO:0033116">
    <property type="term" value="C:endoplasmic reticulum-Golgi intermediate compartment membrane"/>
    <property type="evidence" value="ECO:0007669"/>
    <property type="project" value="UniProtKB-SubCell"/>
</dbReference>
<dbReference type="GO" id="GO:0005794">
    <property type="term" value="C:Golgi apparatus"/>
    <property type="evidence" value="ECO:0000314"/>
    <property type="project" value="MGI"/>
</dbReference>
<dbReference type="GO" id="GO:0032580">
    <property type="term" value="C:Golgi cisterna membrane"/>
    <property type="evidence" value="ECO:0000250"/>
    <property type="project" value="UniProtKB"/>
</dbReference>
<dbReference type="GO" id="GO:0000139">
    <property type="term" value="C:Golgi membrane"/>
    <property type="evidence" value="ECO:0000314"/>
    <property type="project" value="MGI"/>
</dbReference>
<dbReference type="GO" id="GO:0005874">
    <property type="term" value="C:microtubule"/>
    <property type="evidence" value="ECO:0007669"/>
    <property type="project" value="UniProtKB-KW"/>
</dbReference>
<dbReference type="GO" id="GO:0072686">
    <property type="term" value="C:mitotic spindle"/>
    <property type="evidence" value="ECO:0000250"/>
    <property type="project" value="UniProtKB"/>
</dbReference>
<dbReference type="GO" id="GO:0048471">
    <property type="term" value="C:perinuclear region of cytoplasm"/>
    <property type="evidence" value="ECO:0000314"/>
    <property type="project" value="MGI"/>
</dbReference>
<dbReference type="GO" id="GO:0000922">
    <property type="term" value="C:spindle pole"/>
    <property type="evidence" value="ECO:0000314"/>
    <property type="project" value="UniProtKB"/>
</dbReference>
<dbReference type="GO" id="GO:0061676">
    <property type="term" value="F:importin-alpha family protein binding"/>
    <property type="evidence" value="ECO:0000314"/>
    <property type="project" value="UniProtKB"/>
</dbReference>
<dbReference type="GO" id="GO:0008017">
    <property type="term" value="F:microtubule binding"/>
    <property type="evidence" value="ECO:0000250"/>
    <property type="project" value="UniProtKB"/>
</dbReference>
<dbReference type="GO" id="GO:0008356">
    <property type="term" value="P:asymmetric cell division"/>
    <property type="evidence" value="ECO:0000315"/>
    <property type="project" value="UniProtKB"/>
</dbReference>
<dbReference type="GO" id="GO:0007409">
    <property type="term" value="P:axonogenesis"/>
    <property type="evidence" value="ECO:0000315"/>
    <property type="project" value="MGI"/>
</dbReference>
<dbReference type="GO" id="GO:0007098">
    <property type="term" value="P:centrosome cycle"/>
    <property type="evidence" value="ECO:0000250"/>
    <property type="project" value="UniProtKB"/>
</dbReference>
<dbReference type="GO" id="GO:0006888">
    <property type="term" value="P:endoplasmic reticulum to Golgi vesicle-mediated transport"/>
    <property type="evidence" value="ECO:0000250"/>
    <property type="project" value="UniProtKB"/>
</dbReference>
<dbReference type="GO" id="GO:0090166">
    <property type="term" value="P:Golgi disassembly"/>
    <property type="evidence" value="ECO:0000250"/>
    <property type="project" value="UniProtKB"/>
</dbReference>
<dbReference type="GO" id="GO:0051645">
    <property type="term" value="P:Golgi localization"/>
    <property type="evidence" value="ECO:0000315"/>
    <property type="project" value="MGI"/>
</dbReference>
<dbReference type="GO" id="GO:0090161">
    <property type="term" value="P:Golgi ribbon formation"/>
    <property type="evidence" value="ECO:0000250"/>
    <property type="project" value="UniProtKB"/>
</dbReference>
<dbReference type="GO" id="GO:0090306">
    <property type="term" value="P:meiotic spindle assembly"/>
    <property type="evidence" value="ECO:0000315"/>
    <property type="project" value="UniProtKB"/>
</dbReference>
<dbReference type="GO" id="GO:0007020">
    <property type="term" value="P:microtubule nucleation"/>
    <property type="evidence" value="ECO:0000250"/>
    <property type="project" value="UniProtKB"/>
</dbReference>
<dbReference type="GO" id="GO:0090307">
    <property type="term" value="P:mitotic spindle assembly"/>
    <property type="evidence" value="ECO:0000250"/>
    <property type="project" value="UniProtKB"/>
</dbReference>
<dbReference type="GO" id="GO:0050772">
    <property type="term" value="P:positive regulation of axonogenesis"/>
    <property type="evidence" value="ECO:0000315"/>
    <property type="project" value="MGI"/>
</dbReference>
<dbReference type="GO" id="GO:0006486">
    <property type="term" value="P:protein glycosylation"/>
    <property type="evidence" value="ECO:0000250"/>
    <property type="project" value="UniProtKB"/>
</dbReference>
<dbReference type="GO" id="GO:0051289">
    <property type="term" value="P:protein homotetramerization"/>
    <property type="evidence" value="ECO:0000250"/>
    <property type="project" value="UniProtKB"/>
</dbReference>
<dbReference type="GO" id="GO:0015031">
    <property type="term" value="P:protein transport"/>
    <property type="evidence" value="ECO:0007669"/>
    <property type="project" value="UniProtKB-KW"/>
</dbReference>
<dbReference type="GO" id="GO:0051225">
    <property type="term" value="P:spindle assembly"/>
    <property type="evidence" value="ECO:0000250"/>
    <property type="project" value="UniProtKB"/>
</dbReference>
<dbReference type="InterPro" id="IPR043937">
    <property type="entry name" value="GM130_C"/>
</dbReference>
<dbReference type="InterPro" id="IPR043976">
    <property type="entry name" value="GOLGA_cons_dom"/>
</dbReference>
<dbReference type="InterPro" id="IPR024858">
    <property type="entry name" value="Golgin_A"/>
</dbReference>
<dbReference type="PANTHER" id="PTHR10881:SF46">
    <property type="entry name" value="GOLGIN SUBFAMILY A MEMBER 2"/>
    <property type="match status" value="1"/>
</dbReference>
<dbReference type="PANTHER" id="PTHR10881">
    <property type="entry name" value="GOLGIN SUBFAMILY A MEMBER-RELATED"/>
    <property type="match status" value="1"/>
</dbReference>
<dbReference type="Pfam" id="PF19046">
    <property type="entry name" value="GM130_C"/>
    <property type="match status" value="1"/>
</dbReference>
<dbReference type="Pfam" id="PF15070">
    <property type="entry name" value="GOLGA2L5"/>
    <property type="match status" value="1"/>
</dbReference>
<gene>
    <name type="primary">Golga2</name>
</gene>
<comment type="function">
    <text evidence="1 2 5 7">Peripheral membrane component of the cis-Golgi stack that acts as a membrane skeleton that maintains the structure of the Golgi apparatus, and as a vesicle thether that facilitates vesicle fusion to the Golgi membrane (PubMed:28028212). Required for normal protein transport from the endoplasmic reticulum to the Golgi apparatus and the cell membrane (PubMed:28028212). Together with p115/USO1 and STX5, involved in vesicle tethering and fusion at the cis-Golgi membrane to maintain the stacked and inter-connected structure of the Golgi apparatus. Plays a central role in mitotic Golgi disassembly: phosphorylation at Ser-37 by CDK1 at the onset of mitosis inhibits the interaction with p115/USO1, preventing tethering of COPI vesicles and thereby inhibiting transport through the Golgi apparatus during mitosis. Also plays a key role in spindle pole assembly and centrosome organization (By similarity). Promotes the mitotic spindle pole assembly by activating the spindle assembly factor TPX2 to nucleate microtubules around the Golgi and capture them to couple mitotic membranes to the spindle: upon phosphorylation at the onset of mitosis, GOLGA2 interacts with importin-alpha via the nuclear localization signal region, leading to recruit importin-alpha to the Golgi membranes and liberate the spindle assembly factor TPX2 from importin-alpha. TPX2 then activates AURKA kinase and stimulates local microtubule nucleation. Upon filament assembly, nascent microtubules are further captured by GOLGA2, thus linking Golgi membranes to the spindle (By similarity). Regulates the meiotic spindle pole assembly, probably via the same mechanism (PubMed:21552007). Also regulates the centrosome organization (By similarity). Also required for the Golgi ribbon formation and glycosylation of membrane and secretory proteins (By similarity).</text>
</comment>
<comment type="subunit">
    <text evidence="1 2">Homodimer, may assemble into homohexamers (By similarity). Homotetramer; forms a parallel homotetramer with a flexible rod-like structure that can give rise to I- and Y-shaped conformations. Interacts with GORASP1/GRASP65. The homooligomer forms a complex with GORASP1 with a 1:1 stoichiometry (By similarity). Interacts with RAB1B that has been activated by GTP-binding. Interacts with p115/USO1; interaction with p115/USO1 inhibits interaction with STX5 and/or RAB1B. Interacts with STX5 (By similarity). Interacts with ZFPL1 (By similarity). Interacts with AKAP450/AKAP9; leading to recruit AKAP450/AKAP9 to the cis-Golgi (By similarity).</text>
</comment>
<comment type="subcellular location">
    <subcellularLocation>
        <location evidence="1">Golgi apparatus</location>
        <location evidence="1">cis-Golgi network membrane</location>
        <topology evidence="1">Peripheral membrane protein</topology>
        <orientation evidence="1">Cytoplasmic side</orientation>
    </subcellularLocation>
    <subcellularLocation>
        <location evidence="1">Endoplasmic reticulum-Golgi intermediate compartment membrane</location>
        <topology evidence="1">Peripheral membrane protein</topology>
        <orientation evidence="1">Cytoplasmic side</orientation>
    </subcellularLocation>
    <subcellularLocation>
        <location evidence="1">Cytoplasm</location>
        <location evidence="1">Cytoskeleton</location>
        <location evidence="1">Spindle pole</location>
    </subcellularLocation>
    <text evidence="1 2">Associates with the mitotic spindle during mitosis.</text>
</comment>
<comment type="alternative products">
    <event type="alternative splicing"/>
    <isoform>
        <id>Q921M4-1</id>
        <name>1</name>
        <sequence type="displayed"/>
    </isoform>
    <isoform>
        <id>Q921M4-2</id>
        <name>2</name>
        <sequence type="described" ref="VSP_039027"/>
    </isoform>
</comment>
<comment type="tissue specificity">
    <text evidence="5 6 7 8">Widely expressed. Detected in brain, kidney, lung, liver, spleen, heart, skeletal muscle, thymus and pancreas (PubMed:26742501, PubMed:28028212). Detected in spermatocytes (PubMed:28617811). Present in oocytes during all oocyte meiotic maturation (at protein level).</text>
</comment>
<comment type="domain">
    <text evidence="2">Extended rod-like protein with long coiled-coil domains.</text>
</comment>
<comment type="domain">
    <text evidence="1">The nuclear localization signal (cNLS) mediates interaction with importin-alpha, recruiting importin-alpha to the Golgi membrane and liberating TPX2.</text>
</comment>
<comment type="PTM">
    <text evidence="2">Phosphorylated at Ser-37 by CDK1 at the onset of mitosis, inhibiting the interaction with p115/USO1 and triggering Golgi disassembly. A report however suggests that Golgi disassembly is independent of phosphorylation at Ser-37. Phosphorylated at Ser-37 in prophase as the Golgi complex starts to break down, and remains phosphorylated during further breakdown and partitioning of the Golgi fragments in metaphase and anaphase. In telophase, GM130 is dephosphorylated by PP2A as the Golgi fragments start to reassemble.</text>
</comment>
<comment type="PTM">
    <text evidence="1">Cleaved by caspases at the onset of apoptosis.</text>
</comment>
<comment type="PTM">
    <text evidence="1">Methylation by PRMT5 is required for Golgi ribbon formation.</text>
</comment>
<comment type="disruption phenotype">
    <text evidence="7">Mice are born at the expected Mendelian rate and have normal weight at birth. However, they display strongly decreased growth during the following weeks and die between 15 and 35 days after birth. Mice display ataxia and motor coordination defects that worsen with increasing age. Mice with a neuron-specific gene disruption display normal overall brain architecture, but the size of the cerebellum is strongly reduced in adults. After the third week after birth, a progressive loss of Purkinje cell is observed, leading to cerebellar atrophy. Purkinje cells from mutant mice appear normal at 9 days after birth, but display a strong decrease of the size and arborization of dendrites, associated with impaired dendritic protein transport. Other neurons in the molecular or granule layer of the cerebellum are not affected. Mice with a neuron-specific gene disruption display decreased growth, but have a normal lifespan and have only mild motor coordination defects at three weeks after birth, but defects are obvious at 8 weeks after birth.</text>
</comment>
<comment type="similarity">
    <text evidence="12">Belongs to the GOLGA2 family.</text>
</comment>
<comment type="sequence caution" evidence="12">
    <conflict type="erroneous initiation">
        <sequence resource="EMBL-CDS" id="AAH11407"/>
    </conflict>
    <text>Truncated N-terminus.</text>
</comment>
<comment type="sequence caution" evidence="12">
    <conflict type="erroneous initiation">
        <sequence resource="EMBL-CDS" id="CAM15849"/>
    </conflict>
    <text>Truncated N-terminus.</text>
</comment>